<organism>
    <name type="scientific">Saccharolobus islandicus (strain Y.G.57.14 / Yellowstone #1)</name>
    <name type="common">Sulfolobus islandicus</name>
    <dbReference type="NCBI Taxonomy" id="439386"/>
    <lineage>
        <taxon>Archaea</taxon>
        <taxon>Thermoproteota</taxon>
        <taxon>Thermoprotei</taxon>
        <taxon>Sulfolobales</taxon>
        <taxon>Sulfolobaceae</taxon>
        <taxon>Saccharolobus</taxon>
    </lineage>
</organism>
<evidence type="ECO:0000255" key="1">
    <source>
        <dbReference type="HAMAP-Rule" id="MF_00308"/>
    </source>
</evidence>
<sequence>MSQGQGGITLDDLIAQADYLKRYIDSLQRTQLELLESINSIDSAKQAIETIKSGNKEMLVFIDRKGYLLAKVGGIVGDKVTVHLGLSYYAEVDLDSAIKILDKRKDEISKAAQNLNNELQKAASTYNQIVDILNQIQQAAARRQQGE</sequence>
<dbReference type="EMBL" id="CP001403">
    <property type="protein sequence ID" value="ACP46129.1"/>
    <property type="molecule type" value="Genomic_DNA"/>
</dbReference>
<dbReference type="RefSeq" id="WP_012711733.1">
    <property type="nucleotide sequence ID" value="NC_012622.1"/>
</dbReference>
<dbReference type="SMR" id="C3N7D5"/>
<dbReference type="GeneID" id="84062108"/>
<dbReference type="KEGG" id="siy:YG5714_1873"/>
<dbReference type="HOGENOM" id="CLU_1792160_0_0_2"/>
<dbReference type="Proteomes" id="UP000002308">
    <property type="component" value="Chromosome"/>
</dbReference>
<dbReference type="GO" id="GO:0005737">
    <property type="term" value="C:cytoplasm"/>
    <property type="evidence" value="ECO:0007669"/>
    <property type="project" value="UniProtKB-SubCell"/>
</dbReference>
<dbReference type="GO" id="GO:0016272">
    <property type="term" value="C:prefoldin complex"/>
    <property type="evidence" value="ECO:0007669"/>
    <property type="project" value="UniProtKB-UniRule"/>
</dbReference>
<dbReference type="GO" id="GO:0051082">
    <property type="term" value="F:unfolded protein binding"/>
    <property type="evidence" value="ECO:0007669"/>
    <property type="project" value="UniProtKB-UniRule"/>
</dbReference>
<dbReference type="GO" id="GO:0006457">
    <property type="term" value="P:protein folding"/>
    <property type="evidence" value="ECO:0007669"/>
    <property type="project" value="UniProtKB-UniRule"/>
</dbReference>
<dbReference type="CDD" id="cd00584">
    <property type="entry name" value="Prefoldin_alpha"/>
    <property type="match status" value="1"/>
</dbReference>
<dbReference type="FunFam" id="1.10.287.370:FF:000019">
    <property type="entry name" value="Prefoldin subunit alpha"/>
    <property type="match status" value="1"/>
</dbReference>
<dbReference type="Gene3D" id="1.10.287.370">
    <property type="match status" value="1"/>
</dbReference>
<dbReference type="HAMAP" id="MF_00308">
    <property type="entry name" value="PfdA"/>
    <property type="match status" value="1"/>
</dbReference>
<dbReference type="InterPro" id="IPR011599">
    <property type="entry name" value="PFD_alpha_archaea"/>
</dbReference>
<dbReference type="InterPro" id="IPR009053">
    <property type="entry name" value="Prefoldin"/>
</dbReference>
<dbReference type="InterPro" id="IPR004127">
    <property type="entry name" value="Prefoldin_subunit_alpha"/>
</dbReference>
<dbReference type="NCBIfam" id="TIGR00293">
    <property type="entry name" value="prefoldin subunit alpha"/>
    <property type="match status" value="1"/>
</dbReference>
<dbReference type="PANTHER" id="PTHR12674">
    <property type="entry name" value="PREFOLDIN SUBUNIT 5"/>
    <property type="match status" value="1"/>
</dbReference>
<dbReference type="PANTHER" id="PTHR12674:SF2">
    <property type="entry name" value="PREFOLDIN SUBUNIT 5"/>
    <property type="match status" value="1"/>
</dbReference>
<dbReference type="Pfam" id="PF02996">
    <property type="entry name" value="Prefoldin"/>
    <property type="match status" value="1"/>
</dbReference>
<dbReference type="SUPFAM" id="SSF46579">
    <property type="entry name" value="Prefoldin"/>
    <property type="match status" value="1"/>
</dbReference>
<reference key="1">
    <citation type="journal article" date="2009" name="Proc. Natl. Acad. Sci. U.S.A.">
        <title>Biogeography of the Sulfolobus islandicus pan-genome.</title>
        <authorList>
            <person name="Reno M.L."/>
            <person name="Held N.L."/>
            <person name="Fields C.J."/>
            <person name="Burke P.V."/>
            <person name="Whitaker R.J."/>
        </authorList>
    </citation>
    <scope>NUCLEOTIDE SEQUENCE [LARGE SCALE GENOMIC DNA]</scope>
    <source>
        <strain>Y.G.57.14 / Yellowstone #1</strain>
    </source>
</reference>
<proteinExistence type="inferred from homology"/>
<protein>
    <recommendedName>
        <fullName evidence="1">Prefoldin subunit alpha</fullName>
    </recommendedName>
    <alternativeName>
        <fullName evidence="1">GimC subunit alpha</fullName>
    </alternativeName>
</protein>
<feature type="chain" id="PRO_1000205030" description="Prefoldin subunit alpha">
    <location>
        <begin position="1"/>
        <end position="147"/>
    </location>
</feature>
<gene>
    <name evidence="1" type="primary">pfdA</name>
    <name type="ordered locus">YG5714_1873</name>
</gene>
<name>PFDA_SACI7</name>
<comment type="function">
    <text evidence="1">Molecular chaperone capable of stabilizing a range of proteins. Seems to fulfill an ATP-independent, HSP70-like function in archaeal de novo protein folding.</text>
</comment>
<comment type="subunit">
    <text evidence="1">Heterohexamer of two alpha and four beta subunits.</text>
</comment>
<comment type="subcellular location">
    <subcellularLocation>
        <location evidence="1">Cytoplasm</location>
    </subcellularLocation>
</comment>
<comment type="similarity">
    <text evidence="1">Belongs to the prefoldin alpha subunit family.</text>
</comment>
<accession>C3N7D5</accession>
<keyword id="KW-0143">Chaperone</keyword>
<keyword id="KW-0963">Cytoplasm</keyword>